<proteinExistence type="inferred from homology"/>
<name>RPOA_LISMC</name>
<dbReference type="EC" id="2.7.7.6" evidence="1"/>
<dbReference type="EMBL" id="FM242711">
    <property type="protein sequence ID" value="CAS06328.1"/>
    <property type="molecule type" value="Genomic_DNA"/>
</dbReference>
<dbReference type="RefSeq" id="WP_003723676.1">
    <property type="nucleotide sequence ID" value="NC_012488.1"/>
</dbReference>
<dbReference type="SMR" id="C1KZF5"/>
<dbReference type="KEGG" id="lmc:Lm4b_02573"/>
<dbReference type="HOGENOM" id="CLU_053084_0_1_9"/>
<dbReference type="GO" id="GO:0005737">
    <property type="term" value="C:cytoplasm"/>
    <property type="evidence" value="ECO:0007669"/>
    <property type="project" value="UniProtKB-ARBA"/>
</dbReference>
<dbReference type="GO" id="GO:0000428">
    <property type="term" value="C:DNA-directed RNA polymerase complex"/>
    <property type="evidence" value="ECO:0007669"/>
    <property type="project" value="UniProtKB-KW"/>
</dbReference>
<dbReference type="GO" id="GO:0003677">
    <property type="term" value="F:DNA binding"/>
    <property type="evidence" value="ECO:0007669"/>
    <property type="project" value="UniProtKB-UniRule"/>
</dbReference>
<dbReference type="GO" id="GO:0003899">
    <property type="term" value="F:DNA-directed RNA polymerase activity"/>
    <property type="evidence" value="ECO:0007669"/>
    <property type="project" value="UniProtKB-UniRule"/>
</dbReference>
<dbReference type="GO" id="GO:0046983">
    <property type="term" value="F:protein dimerization activity"/>
    <property type="evidence" value="ECO:0007669"/>
    <property type="project" value="InterPro"/>
</dbReference>
<dbReference type="GO" id="GO:0006351">
    <property type="term" value="P:DNA-templated transcription"/>
    <property type="evidence" value="ECO:0007669"/>
    <property type="project" value="UniProtKB-UniRule"/>
</dbReference>
<dbReference type="CDD" id="cd06928">
    <property type="entry name" value="RNAP_alpha_NTD"/>
    <property type="match status" value="1"/>
</dbReference>
<dbReference type="FunFam" id="1.10.150.20:FF:000001">
    <property type="entry name" value="DNA-directed RNA polymerase subunit alpha"/>
    <property type="match status" value="1"/>
</dbReference>
<dbReference type="FunFam" id="2.170.120.12:FF:000001">
    <property type="entry name" value="DNA-directed RNA polymerase subunit alpha"/>
    <property type="match status" value="1"/>
</dbReference>
<dbReference type="Gene3D" id="1.10.150.20">
    <property type="entry name" value="5' to 3' exonuclease, C-terminal subdomain"/>
    <property type="match status" value="1"/>
</dbReference>
<dbReference type="Gene3D" id="2.170.120.12">
    <property type="entry name" value="DNA-directed RNA polymerase, insert domain"/>
    <property type="match status" value="1"/>
</dbReference>
<dbReference type="Gene3D" id="3.30.1360.10">
    <property type="entry name" value="RNA polymerase, RBP11-like subunit"/>
    <property type="match status" value="1"/>
</dbReference>
<dbReference type="HAMAP" id="MF_00059">
    <property type="entry name" value="RNApol_bact_RpoA"/>
    <property type="match status" value="1"/>
</dbReference>
<dbReference type="InterPro" id="IPR011262">
    <property type="entry name" value="DNA-dir_RNA_pol_insert"/>
</dbReference>
<dbReference type="InterPro" id="IPR011263">
    <property type="entry name" value="DNA-dir_RNA_pol_RpoA/D/Rpb3"/>
</dbReference>
<dbReference type="InterPro" id="IPR011773">
    <property type="entry name" value="DNA-dir_RpoA"/>
</dbReference>
<dbReference type="InterPro" id="IPR036603">
    <property type="entry name" value="RBP11-like"/>
</dbReference>
<dbReference type="InterPro" id="IPR011260">
    <property type="entry name" value="RNAP_asu_C"/>
</dbReference>
<dbReference type="InterPro" id="IPR036643">
    <property type="entry name" value="RNApol_insert_sf"/>
</dbReference>
<dbReference type="NCBIfam" id="NF003513">
    <property type="entry name" value="PRK05182.1-2"/>
    <property type="match status" value="1"/>
</dbReference>
<dbReference type="NCBIfam" id="NF003515">
    <property type="entry name" value="PRK05182.2-1"/>
    <property type="match status" value="1"/>
</dbReference>
<dbReference type="NCBIfam" id="NF003519">
    <property type="entry name" value="PRK05182.2-5"/>
    <property type="match status" value="1"/>
</dbReference>
<dbReference type="NCBIfam" id="TIGR02027">
    <property type="entry name" value="rpoA"/>
    <property type="match status" value="1"/>
</dbReference>
<dbReference type="Pfam" id="PF01000">
    <property type="entry name" value="RNA_pol_A_bac"/>
    <property type="match status" value="1"/>
</dbReference>
<dbReference type="Pfam" id="PF03118">
    <property type="entry name" value="RNA_pol_A_CTD"/>
    <property type="match status" value="1"/>
</dbReference>
<dbReference type="Pfam" id="PF01193">
    <property type="entry name" value="RNA_pol_L"/>
    <property type="match status" value="1"/>
</dbReference>
<dbReference type="SMART" id="SM00662">
    <property type="entry name" value="RPOLD"/>
    <property type="match status" value="1"/>
</dbReference>
<dbReference type="SUPFAM" id="SSF47789">
    <property type="entry name" value="C-terminal domain of RNA polymerase alpha subunit"/>
    <property type="match status" value="1"/>
</dbReference>
<dbReference type="SUPFAM" id="SSF56553">
    <property type="entry name" value="Insert subdomain of RNA polymerase alpha subunit"/>
    <property type="match status" value="1"/>
</dbReference>
<dbReference type="SUPFAM" id="SSF55257">
    <property type="entry name" value="RBP11-like subunits of RNA polymerase"/>
    <property type="match status" value="1"/>
</dbReference>
<accession>C1KZF5</accession>
<comment type="function">
    <text evidence="1">DNA-dependent RNA polymerase catalyzes the transcription of DNA into RNA using the four ribonucleoside triphosphates as substrates.</text>
</comment>
<comment type="catalytic activity">
    <reaction evidence="1">
        <text>RNA(n) + a ribonucleoside 5'-triphosphate = RNA(n+1) + diphosphate</text>
        <dbReference type="Rhea" id="RHEA:21248"/>
        <dbReference type="Rhea" id="RHEA-COMP:14527"/>
        <dbReference type="Rhea" id="RHEA-COMP:17342"/>
        <dbReference type="ChEBI" id="CHEBI:33019"/>
        <dbReference type="ChEBI" id="CHEBI:61557"/>
        <dbReference type="ChEBI" id="CHEBI:140395"/>
        <dbReference type="EC" id="2.7.7.6"/>
    </reaction>
</comment>
<comment type="subunit">
    <text evidence="1">Homodimer. The RNAP catalytic core consists of 2 alpha, 1 beta, 1 beta' and 1 omega subunit. When a sigma factor is associated with the core the holoenzyme is formed, which can initiate transcription.</text>
</comment>
<comment type="domain">
    <text evidence="1">The N-terminal domain is essential for RNAP assembly and basal transcription, whereas the C-terminal domain is involved in interaction with transcriptional regulators and with upstream promoter elements.</text>
</comment>
<comment type="similarity">
    <text evidence="1">Belongs to the RNA polymerase alpha chain family.</text>
</comment>
<protein>
    <recommendedName>
        <fullName evidence="1">DNA-directed RNA polymerase subunit alpha</fullName>
        <shortName evidence="1">RNAP subunit alpha</shortName>
        <ecNumber evidence="1">2.7.7.6</ecNumber>
    </recommendedName>
    <alternativeName>
        <fullName evidence="1">RNA polymerase subunit alpha</fullName>
    </alternativeName>
    <alternativeName>
        <fullName evidence="1">Transcriptase subunit alpha</fullName>
    </alternativeName>
</protein>
<evidence type="ECO:0000255" key="1">
    <source>
        <dbReference type="HAMAP-Rule" id="MF_00059"/>
    </source>
</evidence>
<reference key="1">
    <citation type="journal article" date="2012" name="BMC Genomics">
        <title>Comparative genomics and transcriptomics of lineages I, II, and III strains of Listeria monocytogenes.</title>
        <authorList>
            <person name="Hain T."/>
            <person name="Ghai R."/>
            <person name="Billion A."/>
            <person name="Kuenne C.T."/>
            <person name="Steinweg C."/>
            <person name="Izar B."/>
            <person name="Mohamed W."/>
            <person name="Mraheil M."/>
            <person name="Domann E."/>
            <person name="Schaffrath S."/>
            <person name="Karst U."/>
            <person name="Goesmann A."/>
            <person name="Oehm S."/>
            <person name="Puhler A."/>
            <person name="Merkl R."/>
            <person name="Vorwerk S."/>
            <person name="Glaser P."/>
            <person name="Garrido P."/>
            <person name="Rusniok C."/>
            <person name="Buchrieser C."/>
            <person name="Goebel W."/>
            <person name="Chakraborty T."/>
        </authorList>
    </citation>
    <scope>NUCLEOTIDE SEQUENCE [LARGE SCALE GENOMIC DNA]</scope>
    <source>
        <strain>CLIP80459</strain>
    </source>
</reference>
<gene>
    <name evidence="1" type="primary">rpoA</name>
    <name type="ordered locus">Lm4b_02573</name>
</gene>
<sequence>MIEIEKPKIETIEISDDAKYGKFVVEPLERGYGTTLGNSLRRILLSSLPGAAVTSIQIDGALHEFSVIEGVVEDVTTMILNIKKLALKIYSDEEKTLEIDMQGPGVVTAADINYDSDVEILNPDLHIATLSDNAKFHVRLNATRGRGYTPADQNKRENMPIGVLPVDSIFSPVIRVNYQVENTRVGQSTNYDKLTFDVLTDGSISPEEAVSLGAKILSEHLSIFVNLTDEAQKAEIMIEKEESHKEKVLEMTIEELDLSVRSYNCLKRAGINTVQELADKSEDDMMKVRNLGRKSLEEVKVKLADLGLSLRNEN</sequence>
<keyword id="KW-0240">DNA-directed RNA polymerase</keyword>
<keyword id="KW-0548">Nucleotidyltransferase</keyword>
<keyword id="KW-0804">Transcription</keyword>
<keyword id="KW-0808">Transferase</keyword>
<feature type="chain" id="PRO_1000202356" description="DNA-directed RNA polymerase subunit alpha">
    <location>
        <begin position="1"/>
        <end position="314"/>
    </location>
</feature>
<feature type="region of interest" description="Alpha N-terminal domain (alpha-NTD)" evidence="1">
    <location>
        <begin position="1"/>
        <end position="228"/>
    </location>
</feature>
<feature type="region of interest" description="Alpha C-terminal domain (alpha-CTD)" evidence="1">
    <location>
        <begin position="245"/>
        <end position="314"/>
    </location>
</feature>
<organism>
    <name type="scientific">Listeria monocytogenes serotype 4b (strain CLIP80459)</name>
    <dbReference type="NCBI Taxonomy" id="568819"/>
    <lineage>
        <taxon>Bacteria</taxon>
        <taxon>Bacillati</taxon>
        <taxon>Bacillota</taxon>
        <taxon>Bacilli</taxon>
        <taxon>Bacillales</taxon>
        <taxon>Listeriaceae</taxon>
        <taxon>Listeria</taxon>
    </lineage>
</organism>